<proteinExistence type="evidence at protein level"/>
<dbReference type="EC" id="1.14.19.25" evidence="3"/>
<dbReference type="EMBL" id="L22931">
    <property type="protein sequence ID" value="AAA61778.1"/>
    <property type="molecule type" value="Genomic_DNA"/>
</dbReference>
<dbReference type="EMBL" id="D17579">
    <property type="protein sequence ID" value="BAA04505.1"/>
    <property type="molecule type" value="mRNA"/>
</dbReference>
<dbReference type="EMBL" id="D26508">
    <property type="protein sequence ID" value="BAA05514.1"/>
    <property type="molecule type" value="Genomic_DNA"/>
</dbReference>
<dbReference type="EMBL" id="AC004680">
    <property type="protein sequence ID" value="AAC31854.1"/>
    <property type="molecule type" value="Genomic_DNA"/>
</dbReference>
<dbReference type="EMBL" id="CP002685">
    <property type="protein sequence ID" value="AEC08330.1"/>
    <property type="molecule type" value="Genomic_DNA"/>
</dbReference>
<dbReference type="EMBL" id="AY063966">
    <property type="protein sequence ID" value="AAL36322.1"/>
    <property type="molecule type" value="mRNA"/>
</dbReference>
<dbReference type="EMBL" id="AY096462">
    <property type="protein sequence ID" value="AAM20102.1"/>
    <property type="molecule type" value="mRNA"/>
</dbReference>
<dbReference type="EMBL" id="AK230026">
    <property type="protein sequence ID" value="BAF01848.1"/>
    <property type="molecule type" value="mRNA"/>
</dbReference>
<dbReference type="PIR" id="JQ2335">
    <property type="entry name" value="JQ2335"/>
</dbReference>
<dbReference type="RefSeq" id="NP_180559.1">
    <molecule id="P48623-1"/>
    <property type="nucleotide sequence ID" value="NM_128552.4"/>
</dbReference>
<dbReference type="SMR" id="P48623"/>
<dbReference type="BioGRID" id="2898">
    <property type="interactions" value="6"/>
</dbReference>
<dbReference type="FunCoup" id="P48623">
    <property type="interactions" value="1"/>
</dbReference>
<dbReference type="IntAct" id="P48623">
    <property type="interactions" value="3"/>
</dbReference>
<dbReference type="STRING" id="3702.P48623"/>
<dbReference type="PaxDb" id="3702-AT2G29980.1"/>
<dbReference type="ProteomicsDB" id="222521">
    <molecule id="P48623-1"/>
</dbReference>
<dbReference type="EnsemblPlants" id="AT2G29980.1">
    <molecule id="P48623-1"/>
    <property type="protein sequence ID" value="AT2G29980.1"/>
    <property type="gene ID" value="AT2G29980"/>
</dbReference>
<dbReference type="GeneID" id="817548"/>
<dbReference type="Gramene" id="AT2G29980.1">
    <molecule id="P48623-1"/>
    <property type="protein sequence ID" value="AT2G29980.1"/>
    <property type="gene ID" value="AT2G29980"/>
</dbReference>
<dbReference type="KEGG" id="ath:AT2G29980"/>
<dbReference type="Araport" id="AT2G29980"/>
<dbReference type="TAIR" id="AT2G29980">
    <property type="gene designation" value="FAD3"/>
</dbReference>
<dbReference type="eggNOG" id="ENOG502QTIC">
    <property type="taxonomic scope" value="Eukaryota"/>
</dbReference>
<dbReference type="HOGENOM" id="CLU_033094_1_0_1"/>
<dbReference type="InParanoid" id="P48623"/>
<dbReference type="OMA" id="NKCQFVE"/>
<dbReference type="OrthoDB" id="1461976at2759"/>
<dbReference type="PhylomeDB" id="P48623"/>
<dbReference type="BioCyc" id="ARA:AT2G29980-MONOMER"/>
<dbReference type="BioCyc" id="MetaCyc:AT2G29980-MONOMER"/>
<dbReference type="BRENDA" id="1.14.19.25">
    <property type="organism ID" value="399"/>
</dbReference>
<dbReference type="UniPathway" id="UPA00658"/>
<dbReference type="PRO" id="PR:P48623"/>
<dbReference type="Proteomes" id="UP000006548">
    <property type="component" value="Chromosome 2"/>
</dbReference>
<dbReference type="ExpressionAtlas" id="P48623">
    <property type="expression patterns" value="baseline and differential"/>
</dbReference>
<dbReference type="GO" id="GO:0005783">
    <property type="term" value="C:endoplasmic reticulum"/>
    <property type="evidence" value="ECO:0000315"/>
    <property type="project" value="TAIR"/>
</dbReference>
<dbReference type="GO" id="GO:0005789">
    <property type="term" value="C:endoplasmic reticulum membrane"/>
    <property type="evidence" value="ECO:0007669"/>
    <property type="project" value="UniProtKB-SubCell"/>
</dbReference>
<dbReference type="GO" id="GO:0102859">
    <property type="term" value="F:acyl-lipid omega-3 desaturase (cytochrome b5) activity"/>
    <property type="evidence" value="ECO:0007669"/>
    <property type="project" value="UniProtKB-EC"/>
</dbReference>
<dbReference type="GO" id="GO:0042389">
    <property type="term" value="F:omega-3 fatty acid desaturase activity"/>
    <property type="evidence" value="ECO:0000315"/>
    <property type="project" value="TAIR"/>
</dbReference>
<dbReference type="GO" id="GO:0006636">
    <property type="term" value="P:unsaturated fatty acid biosynthetic process"/>
    <property type="evidence" value="ECO:0000315"/>
    <property type="project" value="TAIR"/>
</dbReference>
<dbReference type="CDD" id="cd03507">
    <property type="entry name" value="Delta12-FADS-like"/>
    <property type="match status" value="1"/>
</dbReference>
<dbReference type="InterPro" id="IPR005804">
    <property type="entry name" value="FA_desaturase_dom"/>
</dbReference>
<dbReference type="InterPro" id="IPR021863">
    <property type="entry name" value="FAS_N"/>
</dbReference>
<dbReference type="InterPro" id="IPR012171">
    <property type="entry name" value="Fatty_acid_desaturase"/>
</dbReference>
<dbReference type="PANTHER" id="PTHR32100">
    <property type="entry name" value="OMEGA-6 FATTY ACID DESATURASE, CHLOROPLASTIC"/>
    <property type="match status" value="1"/>
</dbReference>
<dbReference type="Pfam" id="PF11960">
    <property type="entry name" value="DUF3474"/>
    <property type="match status" value="1"/>
</dbReference>
<dbReference type="Pfam" id="PF00487">
    <property type="entry name" value="FA_desaturase"/>
    <property type="match status" value="1"/>
</dbReference>
<keyword id="KW-0025">Alternative splicing</keyword>
<keyword id="KW-0256">Endoplasmic reticulum</keyword>
<keyword id="KW-0275">Fatty acid biosynthesis</keyword>
<keyword id="KW-0276">Fatty acid metabolism</keyword>
<keyword id="KW-0444">Lipid biosynthesis</keyword>
<keyword id="KW-0443">Lipid metabolism</keyword>
<keyword id="KW-0472">Membrane</keyword>
<keyword id="KW-0560">Oxidoreductase</keyword>
<keyword id="KW-1185">Reference proteome</keyword>
<keyword id="KW-0812">Transmembrane</keyword>
<keyword id="KW-1133">Transmembrane helix</keyword>
<protein>
    <recommendedName>
        <fullName evidence="5">Acyl-lipid omega-3 desaturase (cytochrome b5), endoplasmic reticulum</fullName>
        <ecNumber evidence="3">1.14.19.25</ecNumber>
    </recommendedName>
    <alternativeName>
        <fullName evidence="5">Omega-3 fatty acid desaturase 3, endoplasmic reticulum</fullName>
    </alternativeName>
</protein>
<accession>P48623</accession>
<accession>Q0WM09</accession>
<name>FAD3E_ARATH</name>
<reference key="1">
    <citation type="journal article" date="1993" name="Plant Physiol.">
        <title>Cloning of higher plant omega-3 fatty acid desaturases.</title>
        <authorList>
            <person name="Yadav N.S."/>
            <person name="Wierzbicki A."/>
            <person name="Aegerter M."/>
            <person name="Caster C.S."/>
            <person name="Perez-Grau L."/>
            <person name="Kinney A.J."/>
            <person name="Hitz W.D."/>
            <person name="Booth J.R. Jr."/>
            <person name="Schweiger B."/>
            <person name="Stecca K.L."/>
            <person name="Allen S.M."/>
            <person name="Blackwell M."/>
            <person name="Reiter R.S."/>
            <person name="Carlson T.J."/>
            <person name="Russell S.H."/>
            <person name="Feldmann K.A."/>
            <person name="Pierce J."/>
            <person name="Browse J."/>
        </authorList>
    </citation>
    <scope>NUCLEOTIDE SEQUENCE [GENOMIC DNA]</scope>
    <scope>FUNCTION</scope>
    <scope>PATHWAY</scope>
    <scope>CATALYTIC ACTIVITY</scope>
    <scope>TISSUE SPECIFICITY</scope>
    <source>
        <strain>cv. Columbia</strain>
        <tissue>Seedling</tissue>
    </source>
</reference>
<reference key="2">
    <citation type="submission" date="1993-09" db="EMBL/GenBank/DDBJ databases">
        <title>cDNA cloning of fatty acid desaturase from Arabidopsis thaliana.</title>
        <authorList>
            <person name="Watahiki M.C."/>
            <person name="Yamamoto K.T."/>
        </authorList>
    </citation>
    <scope>NUCLEOTIDE SEQUENCE [MRNA]</scope>
    <source>
        <strain>cv. Columbia</strain>
        <tissue>Hypocotyl</tissue>
    </source>
</reference>
<reference key="3">
    <citation type="journal article" date="1994" name="Plant Physiol.">
        <title>Genomic nucleotide sequence of a gene encoding a microsomal omega-3 fatty acid desaturase from Arabidopsis thaliana.</title>
        <authorList>
            <person name="Nishiuchi T."/>
            <person name="Nishimura M."/>
            <person name="Arondel V."/>
            <person name="Iba K."/>
        </authorList>
    </citation>
    <scope>NUCLEOTIDE SEQUENCE [GENOMIC DNA]</scope>
    <source>
        <strain>cv. Columbia</strain>
    </source>
</reference>
<reference key="4">
    <citation type="journal article" date="1999" name="Nature">
        <title>Sequence and analysis of chromosome 2 of the plant Arabidopsis thaliana.</title>
        <authorList>
            <person name="Lin X."/>
            <person name="Kaul S."/>
            <person name="Rounsley S.D."/>
            <person name="Shea T.P."/>
            <person name="Benito M.-I."/>
            <person name="Town C.D."/>
            <person name="Fujii C.Y."/>
            <person name="Mason T.M."/>
            <person name="Bowman C.L."/>
            <person name="Barnstead M.E."/>
            <person name="Feldblyum T.V."/>
            <person name="Buell C.R."/>
            <person name="Ketchum K.A."/>
            <person name="Lee J.J."/>
            <person name="Ronning C.M."/>
            <person name="Koo H.L."/>
            <person name="Moffat K.S."/>
            <person name="Cronin L.A."/>
            <person name="Shen M."/>
            <person name="Pai G."/>
            <person name="Van Aken S."/>
            <person name="Umayam L."/>
            <person name="Tallon L.J."/>
            <person name="Gill J.E."/>
            <person name="Adams M.D."/>
            <person name="Carrera A.J."/>
            <person name="Creasy T.H."/>
            <person name="Goodman H.M."/>
            <person name="Somerville C.R."/>
            <person name="Copenhaver G.P."/>
            <person name="Preuss D."/>
            <person name="Nierman W.C."/>
            <person name="White O."/>
            <person name="Eisen J.A."/>
            <person name="Salzberg S.L."/>
            <person name="Fraser C.M."/>
            <person name="Venter J.C."/>
        </authorList>
    </citation>
    <scope>NUCLEOTIDE SEQUENCE [LARGE SCALE GENOMIC DNA]</scope>
    <source>
        <strain>cv. Columbia</strain>
    </source>
</reference>
<reference key="5">
    <citation type="journal article" date="2017" name="Plant J.">
        <title>Araport11: a complete reannotation of the Arabidopsis thaliana reference genome.</title>
        <authorList>
            <person name="Cheng C.Y."/>
            <person name="Krishnakumar V."/>
            <person name="Chan A.P."/>
            <person name="Thibaud-Nissen F."/>
            <person name="Schobel S."/>
            <person name="Town C.D."/>
        </authorList>
    </citation>
    <scope>GENOME REANNOTATION</scope>
    <source>
        <strain>cv. Columbia</strain>
    </source>
</reference>
<reference key="6">
    <citation type="journal article" date="2003" name="Science">
        <title>Empirical analysis of transcriptional activity in the Arabidopsis genome.</title>
        <authorList>
            <person name="Yamada K."/>
            <person name="Lim J."/>
            <person name="Dale J.M."/>
            <person name="Chen H."/>
            <person name="Shinn P."/>
            <person name="Palm C.J."/>
            <person name="Southwick A.M."/>
            <person name="Wu H.C."/>
            <person name="Kim C.J."/>
            <person name="Nguyen M."/>
            <person name="Pham P.K."/>
            <person name="Cheuk R.F."/>
            <person name="Karlin-Newmann G."/>
            <person name="Liu S.X."/>
            <person name="Lam B."/>
            <person name="Sakano H."/>
            <person name="Wu T."/>
            <person name="Yu G."/>
            <person name="Miranda M."/>
            <person name="Quach H.L."/>
            <person name="Tripp M."/>
            <person name="Chang C.H."/>
            <person name="Lee J.M."/>
            <person name="Toriumi M.J."/>
            <person name="Chan M.M."/>
            <person name="Tang C.C."/>
            <person name="Onodera C.S."/>
            <person name="Deng J.M."/>
            <person name="Akiyama K."/>
            <person name="Ansari Y."/>
            <person name="Arakawa T."/>
            <person name="Banh J."/>
            <person name="Banno F."/>
            <person name="Bowser L."/>
            <person name="Brooks S.Y."/>
            <person name="Carninci P."/>
            <person name="Chao Q."/>
            <person name="Choy N."/>
            <person name="Enju A."/>
            <person name="Goldsmith A.D."/>
            <person name="Gurjal M."/>
            <person name="Hansen N.F."/>
            <person name="Hayashizaki Y."/>
            <person name="Johnson-Hopson C."/>
            <person name="Hsuan V.W."/>
            <person name="Iida K."/>
            <person name="Karnes M."/>
            <person name="Khan S."/>
            <person name="Koesema E."/>
            <person name="Ishida J."/>
            <person name="Jiang P.X."/>
            <person name="Jones T."/>
            <person name="Kawai J."/>
            <person name="Kamiya A."/>
            <person name="Meyers C."/>
            <person name="Nakajima M."/>
            <person name="Narusaka M."/>
            <person name="Seki M."/>
            <person name="Sakurai T."/>
            <person name="Satou M."/>
            <person name="Tamse R."/>
            <person name="Vaysberg M."/>
            <person name="Wallender E.K."/>
            <person name="Wong C."/>
            <person name="Yamamura Y."/>
            <person name="Yuan S."/>
            <person name="Shinozaki K."/>
            <person name="Davis R.W."/>
            <person name="Theologis A."/>
            <person name="Ecker J.R."/>
        </authorList>
    </citation>
    <scope>NUCLEOTIDE SEQUENCE [LARGE SCALE MRNA]</scope>
    <source>
        <strain>cv. Columbia</strain>
    </source>
</reference>
<reference key="7">
    <citation type="submission" date="2006-07" db="EMBL/GenBank/DDBJ databases">
        <title>Large-scale analysis of RIKEN Arabidopsis full-length (RAFL) cDNAs.</title>
        <authorList>
            <person name="Totoki Y."/>
            <person name="Seki M."/>
            <person name="Ishida J."/>
            <person name="Nakajima M."/>
            <person name="Enju A."/>
            <person name="Kamiya A."/>
            <person name="Narusaka M."/>
            <person name="Shin-i T."/>
            <person name="Nakagawa M."/>
            <person name="Sakamoto N."/>
            <person name="Oishi K."/>
            <person name="Kohara Y."/>
            <person name="Kobayashi M."/>
            <person name="Toyoda A."/>
            <person name="Sakaki Y."/>
            <person name="Sakurai T."/>
            <person name="Iida K."/>
            <person name="Akiyama K."/>
            <person name="Satou M."/>
            <person name="Toyoda T."/>
            <person name="Konagaya A."/>
            <person name="Carninci P."/>
            <person name="Kawai J."/>
            <person name="Hayashizaki Y."/>
            <person name="Shinozaki K."/>
        </authorList>
    </citation>
    <scope>NUCLEOTIDE SEQUENCE [LARGE SCALE MRNA] OF 162-386</scope>
    <source>
        <strain>cv. Columbia</strain>
    </source>
</reference>
<reference key="8">
    <citation type="journal article" date="1993" name="J. Biol. Chem.">
        <title>Mutants of Arabidopsis deficient in the synthesis of alpha-linolenate. Biochemical and genetic characterization of the endoplasmic reticulum linoleoyl desaturase.</title>
        <authorList>
            <person name="Browse J."/>
            <person name="McConn M."/>
            <person name="James D. Jr."/>
            <person name="Miquel M."/>
        </authorList>
    </citation>
    <scope>FUNCTION</scope>
</reference>
<sequence>MVVAMDQRTNVNGDPGAGDRKKEERFDPSAQPPFKIGDIRAAIPKHCWVKSPLRSMSYVVRDIIAVAALAIAAVYVDSWFLWPLYWAAQGTLFWAIFVLGHDCGHGSFSDIPLLNSVVGHILHSFILVPYHGWRISHRTHHQNHGHVENDESWVPLPERVYKKLPHSTRMLRYTVPLPMLAYPLYLCYRSPGKEGSHFNPYSSLFAPSERKLIATSTTCWSIMFVSLIALSFVFGPLAVLKVYGVPYIIFVMWLDAVTYLHHHGHDEKLPWYRGKEWSYLRGGLTTIDRDYGIFNNIHHDIGTHVIHHLFPQIPHYHLVDATKAAKHVLGRYYREPKTSGAIPIHLVESLVASIKKDHYVSDTGDIVFYETDPDLYVYASDKSKIN</sequence>
<evidence type="ECO:0000255" key="1"/>
<evidence type="ECO:0000256" key="2">
    <source>
        <dbReference type="SAM" id="MobiDB-lite"/>
    </source>
</evidence>
<evidence type="ECO:0000269" key="3">
    <source>
    </source>
</evidence>
<evidence type="ECO:0000269" key="4">
    <source>
    </source>
</evidence>
<evidence type="ECO:0000303" key="5">
    <source>
    </source>
</evidence>
<evidence type="ECO:0000305" key="6"/>
<evidence type="ECO:0000305" key="7">
    <source>
    </source>
</evidence>
<evidence type="ECO:0000312" key="8">
    <source>
        <dbReference type="Araport" id="AT2G29980"/>
    </source>
</evidence>
<evidence type="ECO:0000312" key="9">
    <source>
        <dbReference type="EMBL" id="AAC31854.1"/>
    </source>
</evidence>
<gene>
    <name evidence="5" type="primary">FAD3</name>
    <name evidence="8" type="ordered locus">At2g29980</name>
    <name evidence="9" type="ORF">F23F1.10</name>
</gene>
<comment type="function">
    <text evidence="3 4">Microsomal (ER) omega-3 fatty acid desaturase introduces the third double bond in the biosynthesis of 18:3 fatty acids, important constituents of plant membranes. It is thought to use cytochrome b5 as an electron donor and to act on fatty acids esterified to phosphatidylcholine and, possibly, other phospholipids.</text>
</comment>
<comment type="catalytic activity">
    <reaction evidence="3">
        <text>a (9Z,12Z)-octadecadienoyl-containing glycerolipid + 2 Fe(II)-[cytochrome b5] + O2 + 2 H(+) = (9Z,12Z,15Z)-octadecatrienoyl-containing glycerolipid + 2 Fe(III)-[cytochrome b5] + 2 H2O</text>
        <dbReference type="Rhea" id="RHEA:46404"/>
        <dbReference type="Rhea" id="RHEA-COMP:10438"/>
        <dbReference type="Rhea" id="RHEA-COMP:10439"/>
        <dbReference type="ChEBI" id="CHEBI:15377"/>
        <dbReference type="ChEBI" id="CHEBI:15378"/>
        <dbReference type="ChEBI" id="CHEBI:15379"/>
        <dbReference type="ChEBI" id="CHEBI:29033"/>
        <dbReference type="ChEBI" id="CHEBI:29034"/>
        <dbReference type="ChEBI" id="CHEBI:88351"/>
        <dbReference type="ChEBI" id="CHEBI:90078"/>
        <dbReference type="EC" id="1.14.19.25"/>
    </reaction>
</comment>
<comment type="pathway">
    <text evidence="3">Lipid metabolism; polyunsaturated fatty acid biosynthesis.</text>
</comment>
<comment type="subcellular location">
    <subcellularLocation>
        <location evidence="7">Endoplasmic reticulum membrane</location>
        <topology evidence="1">Multi-pass membrane protein</topology>
    </subcellularLocation>
</comment>
<comment type="alternative products">
    <event type="alternative splicing"/>
    <isoform>
        <id>P48623-1</id>
        <name>1</name>
        <sequence type="displayed"/>
    </isoform>
    <text evidence="6">A number of isoforms are produced. According to EST sequences.</text>
</comment>
<comment type="tissue specificity">
    <text evidence="3">Abundant in leaves and seedlings. Barely detectable in root tissue.</text>
</comment>
<comment type="domain">
    <text evidence="6">The histidine box domains may contain the active site and/or be involved in metal ion binding.</text>
</comment>
<comment type="similarity">
    <text evidence="6">Belongs to the fatty acid desaturase type 1 family.</text>
</comment>
<organism>
    <name type="scientific">Arabidopsis thaliana</name>
    <name type="common">Mouse-ear cress</name>
    <dbReference type="NCBI Taxonomy" id="3702"/>
    <lineage>
        <taxon>Eukaryota</taxon>
        <taxon>Viridiplantae</taxon>
        <taxon>Streptophyta</taxon>
        <taxon>Embryophyta</taxon>
        <taxon>Tracheophyta</taxon>
        <taxon>Spermatophyta</taxon>
        <taxon>Magnoliopsida</taxon>
        <taxon>eudicotyledons</taxon>
        <taxon>Gunneridae</taxon>
        <taxon>Pentapetalae</taxon>
        <taxon>rosids</taxon>
        <taxon>malvids</taxon>
        <taxon>Brassicales</taxon>
        <taxon>Brassicaceae</taxon>
        <taxon>Camelineae</taxon>
        <taxon>Arabidopsis</taxon>
    </lineage>
</organism>
<feature type="chain" id="PRO_0000185411" description="Acyl-lipid omega-3 desaturase (cytochrome b5), endoplasmic reticulum">
    <location>
        <begin position="1"/>
        <end position="386"/>
    </location>
</feature>
<feature type="transmembrane region" description="Helical" evidence="1">
    <location>
        <begin position="63"/>
        <end position="83"/>
    </location>
</feature>
<feature type="transmembrane region" description="Helical" evidence="1">
    <location>
        <begin position="220"/>
        <end position="240"/>
    </location>
</feature>
<feature type="transmembrane region" description="Helical" evidence="1">
    <location>
        <begin position="242"/>
        <end position="262"/>
    </location>
</feature>
<feature type="region of interest" description="Disordered" evidence="2">
    <location>
        <begin position="1"/>
        <end position="30"/>
    </location>
</feature>
<feature type="short sequence motif" description="Histidine box-1" evidence="6">
    <location>
        <begin position="101"/>
        <end position="105"/>
    </location>
</feature>
<feature type="short sequence motif" description="Histidine box-2" evidence="6">
    <location>
        <begin position="137"/>
        <end position="141"/>
    </location>
</feature>
<feature type="short sequence motif" description="Histidine box-3" evidence="6">
    <location>
        <begin position="304"/>
        <end position="308"/>
    </location>
</feature>
<feature type="compositionally biased region" description="Basic and acidic residues" evidence="2">
    <location>
        <begin position="17"/>
        <end position="27"/>
    </location>
</feature>